<feature type="signal peptide" evidence="2">
    <location>
        <begin position="1"/>
        <end position="24"/>
    </location>
</feature>
<feature type="chain" id="PRO_5000395598" description="Kunitz-type serine protease inhibitor superbin-2">
    <location>
        <begin position="25"/>
        <end position="83"/>
    </location>
</feature>
<feature type="domain" description="BPTI/Kunitz inhibitor" evidence="3">
    <location>
        <begin position="31"/>
        <end position="81"/>
    </location>
</feature>
<feature type="site" description="Reactive bond for trypsin" evidence="1">
    <location>
        <begin position="41"/>
        <end position="42"/>
    </location>
</feature>
<feature type="disulfide bond" evidence="3">
    <location>
        <begin position="31"/>
        <end position="81"/>
    </location>
</feature>
<feature type="disulfide bond" evidence="3">
    <location>
        <begin position="40"/>
        <end position="64"/>
    </location>
</feature>
<feature type="disulfide bond" evidence="3">
    <location>
        <begin position="56"/>
        <end position="77"/>
    </location>
</feature>
<organism>
    <name type="scientific">Austrelaps superbus</name>
    <name type="common">Lowland copperhead snake</name>
    <name type="synonym">Hoplocephalus superbus</name>
    <dbReference type="NCBI Taxonomy" id="29156"/>
    <lineage>
        <taxon>Eukaryota</taxon>
        <taxon>Metazoa</taxon>
        <taxon>Chordata</taxon>
        <taxon>Craniata</taxon>
        <taxon>Vertebrata</taxon>
        <taxon>Euteleostomi</taxon>
        <taxon>Lepidosauria</taxon>
        <taxon>Squamata</taxon>
        <taxon>Bifurcata</taxon>
        <taxon>Unidentata</taxon>
        <taxon>Episquamata</taxon>
        <taxon>Toxicofera</taxon>
        <taxon>Serpentes</taxon>
        <taxon>Colubroidea</taxon>
        <taxon>Elapidae</taxon>
        <taxon>Hydrophiinae</taxon>
        <taxon>Austrelaps</taxon>
    </lineage>
</organism>
<proteinExistence type="evidence at transcript level"/>
<protein>
    <recommendedName>
        <fullName>Kunitz-type serine protease inhibitor superbin-2</fullName>
    </recommendedName>
</protein>
<sequence>MSSGGLLLLLGLLTLWEVLTPISSKDRPKFCELPADTGPCKAIFQAFYYHPVHRTCLKFIYGGCEGNANNFKTIDECKRTCAA</sequence>
<keyword id="KW-1015">Disulfide bond</keyword>
<keyword id="KW-0646">Protease inhibitor</keyword>
<keyword id="KW-0964">Secreted</keyword>
<keyword id="KW-0722">Serine protease inhibitor</keyword>
<keyword id="KW-0732">Signal</keyword>
<name>VKT2_AUSSU</name>
<accession>B5KL39</accession>
<comment type="function">
    <text evidence="1">Serine protease inhibitor.</text>
</comment>
<comment type="subcellular location">
    <subcellularLocation>
        <location evidence="1">Secreted</location>
    </subcellularLocation>
</comment>
<comment type="tissue specificity">
    <text>Expressed by the venom gland.</text>
</comment>
<comment type="similarity">
    <text evidence="4">Belongs to the venom Kunitz-type family.</text>
</comment>
<dbReference type="EMBL" id="EF990747">
    <property type="protein sequence ID" value="ABV64401.1"/>
    <property type="molecule type" value="mRNA"/>
</dbReference>
<dbReference type="SMR" id="B5KL39"/>
<dbReference type="MEROPS" id="I02.052"/>
<dbReference type="GO" id="GO:0005615">
    <property type="term" value="C:extracellular space"/>
    <property type="evidence" value="ECO:0007669"/>
    <property type="project" value="TreeGrafter"/>
</dbReference>
<dbReference type="GO" id="GO:0004867">
    <property type="term" value="F:serine-type endopeptidase inhibitor activity"/>
    <property type="evidence" value="ECO:0007669"/>
    <property type="project" value="UniProtKB-KW"/>
</dbReference>
<dbReference type="CDD" id="cd22594">
    <property type="entry name" value="Kunitz_textilinin-like"/>
    <property type="match status" value="1"/>
</dbReference>
<dbReference type="FunFam" id="4.10.410.10:FF:000021">
    <property type="entry name" value="Serine protease inhibitor, putative"/>
    <property type="match status" value="1"/>
</dbReference>
<dbReference type="Gene3D" id="4.10.410.10">
    <property type="entry name" value="Pancreatic trypsin inhibitor Kunitz domain"/>
    <property type="match status" value="1"/>
</dbReference>
<dbReference type="InterPro" id="IPR002223">
    <property type="entry name" value="Kunitz_BPTI"/>
</dbReference>
<dbReference type="InterPro" id="IPR036880">
    <property type="entry name" value="Kunitz_BPTI_sf"/>
</dbReference>
<dbReference type="InterPro" id="IPR020901">
    <property type="entry name" value="Prtase_inh_Kunz-CS"/>
</dbReference>
<dbReference type="InterPro" id="IPR050098">
    <property type="entry name" value="TFPI/VKTCI-like"/>
</dbReference>
<dbReference type="PANTHER" id="PTHR10083:SF374">
    <property type="entry name" value="BPTI_KUNITZ INHIBITOR DOMAIN-CONTAINING PROTEIN"/>
    <property type="match status" value="1"/>
</dbReference>
<dbReference type="PANTHER" id="PTHR10083">
    <property type="entry name" value="KUNITZ-TYPE PROTEASE INHIBITOR-RELATED"/>
    <property type="match status" value="1"/>
</dbReference>
<dbReference type="Pfam" id="PF00014">
    <property type="entry name" value="Kunitz_BPTI"/>
    <property type="match status" value="1"/>
</dbReference>
<dbReference type="PRINTS" id="PR00759">
    <property type="entry name" value="BASICPTASE"/>
</dbReference>
<dbReference type="SMART" id="SM00131">
    <property type="entry name" value="KU"/>
    <property type="match status" value="1"/>
</dbReference>
<dbReference type="SUPFAM" id="SSF57362">
    <property type="entry name" value="BPTI-like"/>
    <property type="match status" value="1"/>
</dbReference>
<dbReference type="PROSITE" id="PS00280">
    <property type="entry name" value="BPTI_KUNITZ_1"/>
    <property type="match status" value="1"/>
</dbReference>
<dbReference type="PROSITE" id="PS50279">
    <property type="entry name" value="BPTI_KUNITZ_2"/>
    <property type="match status" value="1"/>
</dbReference>
<evidence type="ECO:0000250" key="1"/>
<evidence type="ECO:0000255" key="2"/>
<evidence type="ECO:0000255" key="3">
    <source>
        <dbReference type="PROSITE-ProRule" id="PRU00031"/>
    </source>
</evidence>
<evidence type="ECO:0000305" key="4"/>
<reference key="1">
    <citation type="submission" date="2007-06" db="EMBL/GenBank/DDBJ databases">
        <title>Identification of Kunitz-type serine protease inhibitors from the venom glands of Australian elapid snakes.</title>
        <authorList>
            <person name="St Pierre L."/>
            <person name="Earl S."/>
        </authorList>
    </citation>
    <scope>NUCLEOTIDE SEQUENCE [MRNA]</scope>
    <source>
        <tissue>Venom gland</tissue>
    </source>
</reference>